<keyword id="KW-0131">Cell cycle</keyword>
<keyword id="KW-0132">Cell division</keyword>
<keyword id="KW-0997">Cell inner membrane</keyword>
<keyword id="KW-1003">Cell membrane</keyword>
<keyword id="KW-0133">Cell shape</keyword>
<keyword id="KW-0961">Cell wall biogenesis/degradation</keyword>
<keyword id="KW-0328">Glycosyltransferase</keyword>
<keyword id="KW-0472">Membrane</keyword>
<keyword id="KW-0573">Peptidoglycan synthesis</keyword>
<keyword id="KW-1185">Reference proteome</keyword>
<keyword id="KW-0808">Transferase</keyword>
<gene>
    <name evidence="1" type="primary">murG</name>
    <name type="ordered locus">H16_A3273</name>
</gene>
<feature type="chain" id="PRO_1000002683" description="UDP-N-acetylglucosamine--N-acetylmuramyl-(pentapeptide) pyrophosphoryl-undecaprenol N-acetylglucosamine transferase">
    <location>
        <begin position="1"/>
        <end position="356"/>
    </location>
</feature>
<feature type="binding site" evidence="1">
    <location>
        <begin position="14"/>
        <end position="16"/>
    </location>
    <ligand>
        <name>UDP-N-acetyl-alpha-D-glucosamine</name>
        <dbReference type="ChEBI" id="CHEBI:57705"/>
    </ligand>
</feature>
<feature type="binding site" evidence="1">
    <location>
        <position position="126"/>
    </location>
    <ligand>
        <name>UDP-N-acetyl-alpha-D-glucosamine</name>
        <dbReference type="ChEBI" id="CHEBI:57705"/>
    </ligand>
</feature>
<feature type="binding site" evidence="1">
    <location>
        <position position="162"/>
    </location>
    <ligand>
        <name>UDP-N-acetyl-alpha-D-glucosamine</name>
        <dbReference type="ChEBI" id="CHEBI:57705"/>
    </ligand>
</feature>
<feature type="binding site" evidence="1">
    <location>
        <position position="190"/>
    </location>
    <ligand>
        <name>UDP-N-acetyl-alpha-D-glucosamine</name>
        <dbReference type="ChEBI" id="CHEBI:57705"/>
    </ligand>
</feature>
<feature type="binding site" evidence="1">
    <location>
        <position position="244"/>
    </location>
    <ligand>
        <name>UDP-N-acetyl-alpha-D-glucosamine</name>
        <dbReference type="ChEBI" id="CHEBI:57705"/>
    </ligand>
</feature>
<feature type="binding site" evidence="1">
    <location>
        <position position="289"/>
    </location>
    <ligand>
        <name>UDP-N-acetyl-alpha-D-glucosamine</name>
        <dbReference type="ChEBI" id="CHEBI:57705"/>
    </ligand>
</feature>
<reference key="1">
    <citation type="journal article" date="2006" name="Nat. Biotechnol.">
        <title>Genome sequence of the bioplastic-producing 'Knallgas' bacterium Ralstonia eutropha H16.</title>
        <authorList>
            <person name="Pohlmann A."/>
            <person name="Fricke W.F."/>
            <person name="Reinecke F."/>
            <person name="Kusian B."/>
            <person name="Liesegang H."/>
            <person name="Cramm R."/>
            <person name="Eitinger T."/>
            <person name="Ewering C."/>
            <person name="Poetter M."/>
            <person name="Schwartz E."/>
            <person name="Strittmatter A."/>
            <person name="Voss I."/>
            <person name="Gottschalk G."/>
            <person name="Steinbuechel A."/>
            <person name="Friedrich B."/>
            <person name="Bowien B."/>
        </authorList>
    </citation>
    <scope>NUCLEOTIDE SEQUENCE [LARGE SCALE GENOMIC DNA]</scope>
    <source>
        <strain>ATCC 17699 / DSM 428 / KCTC 22496 / NCIMB 10442 / H16 / Stanier 337</strain>
    </source>
</reference>
<accession>Q0K6M4</accession>
<dbReference type="EC" id="2.4.1.227" evidence="1"/>
<dbReference type="EMBL" id="AM260479">
    <property type="protein sequence ID" value="CAJ94347.1"/>
    <property type="molecule type" value="Genomic_DNA"/>
</dbReference>
<dbReference type="RefSeq" id="WP_010814769.1">
    <property type="nucleotide sequence ID" value="NZ_CP039287.1"/>
</dbReference>
<dbReference type="SMR" id="Q0K6M4"/>
<dbReference type="STRING" id="381666.H16_A3273"/>
<dbReference type="CAZy" id="GT28">
    <property type="family name" value="Glycosyltransferase Family 28"/>
</dbReference>
<dbReference type="KEGG" id="reh:H16_A3273"/>
<dbReference type="eggNOG" id="COG0707">
    <property type="taxonomic scope" value="Bacteria"/>
</dbReference>
<dbReference type="HOGENOM" id="CLU_037404_2_0_4"/>
<dbReference type="OrthoDB" id="9808936at2"/>
<dbReference type="UniPathway" id="UPA00219"/>
<dbReference type="Proteomes" id="UP000008210">
    <property type="component" value="Chromosome 1"/>
</dbReference>
<dbReference type="GO" id="GO:0005886">
    <property type="term" value="C:plasma membrane"/>
    <property type="evidence" value="ECO:0007669"/>
    <property type="project" value="UniProtKB-SubCell"/>
</dbReference>
<dbReference type="GO" id="GO:0051991">
    <property type="term" value="F:UDP-N-acetyl-D-glucosamine:N-acetylmuramoyl-L-alanyl-D-glutamyl-meso-2,6-diaminopimelyl-D-alanyl-D-alanine-diphosphoundecaprenol 4-beta-N-acetylglucosaminlytransferase activity"/>
    <property type="evidence" value="ECO:0007669"/>
    <property type="project" value="RHEA"/>
</dbReference>
<dbReference type="GO" id="GO:0050511">
    <property type="term" value="F:undecaprenyldiphospho-muramoylpentapeptide beta-N-acetylglucosaminyltransferase activity"/>
    <property type="evidence" value="ECO:0007669"/>
    <property type="project" value="UniProtKB-UniRule"/>
</dbReference>
<dbReference type="GO" id="GO:0005975">
    <property type="term" value="P:carbohydrate metabolic process"/>
    <property type="evidence" value="ECO:0007669"/>
    <property type="project" value="InterPro"/>
</dbReference>
<dbReference type="GO" id="GO:0051301">
    <property type="term" value="P:cell division"/>
    <property type="evidence" value="ECO:0007669"/>
    <property type="project" value="UniProtKB-KW"/>
</dbReference>
<dbReference type="GO" id="GO:0071555">
    <property type="term" value="P:cell wall organization"/>
    <property type="evidence" value="ECO:0007669"/>
    <property type="project" value="UniProtKB-KW"/>
</dbReference>
<dbReference type="GO" id="GO:0030259">
    <property type="term" value="P:lipid glycosylation"/>
    <property type="evidence" value="ECO:0007669"/>
    <property type="project" value="UniProtKB-UniRule"/>
</dbReference>
<dbReference type="GO" id="GO:0009252">
    <property type="term" value="P:peptidoglycan biosynthetic process"/>
    <property type="evidence" value="ECO:0007669"/>
    <property type="project" value="UniProtKB-UniRule"/>
</dbReference>
<dbReference type="GO" id="GO:0008360">
    <property type="term" value="P:regulation of cell shape"/>
    <property type="evidence" value="ECO:0007669"/>
    <property type="project" value="UniProtKB-KW"/>
</dbReference>
<dbReference type="CDD" id="cd03785">
    <property type="entry name" value="GT28_MurG"/>
    <property type="match status" value="1"/>
</dbReference>
<dbReference type="Gene3D" id="3.40.50.2000">
    <property type="entry name" value="Glycogen Phosphorylase B"/>
    <property type="match status" value="2"/>
</dbReference>
<dbReference type="HAMAP" id="MF_00033">
    <property type="entry name" value="MurG"/>
    <property type="match status" value="1"/>
</dbReference>
<dbReference type="InterPro" id="IPR006009">
    <property type="entry name" value="GlcNAc_MurG"/>
</dbReference>
<dbReference type="InterPro" id="IPR007235">
    <property type="entry name" value="Glyco_trans_28_C"/>
</dbReference>
<dbReference type="InterPro" id="IPR004276">
    <property type="entry name" value="GlycoTrans_28_N"/>
</dbReference>
<dbReference type="NCBIfam" id="TIGR01133">
    <property type="entry name" value="murG"/>
    <property type="match status" value="1"/>
</dbReference>
<dbReference type="PANTHER" id="PTHR21015:SF22">
    <property type="entry name" value="GLYCOSYLTRANSFERASE"/>
    <property type="match status" value="1"/>
</dbReference>
<dbReference type="PANTHER" id="PTHR21015">
    <property type="entry name" value="UDP-N-ACETYLGLUCOSAMINE--N-ACETYLMURAMYL-(PENTAPEPTIDE) PYROPHOSPHORYL-UNDECAPRENOL N-ACETYLGLUCOSAMINE TRANSFERASE 1"/>
    <property type="match status" value="1"/>
</dbReference>
<dbReference type="Pfam" id="PF04101">
    <property type="entry name" value="Glyco_tran_28_C"/>
    <property type="match status" value="1"/>
</dbReference>
<dbReference type="Pfam" id="PF03033">
    <property type="entry name" value="Glyco_transf_28"/>
    <property type="match status" value="1"/>
</dbReference>
<dbReference type="SUPFAM" id="SSF53756">
    <property type="entry name" value="UDP-Glycosyltransferase/glycogen phosphorylase"/>
    <property type="match status" value="1"/>
</dbReference>
<protein>
    <recommendedName>
        <fullName evidence="1">UDP-N-acetylglucosamine--N-acetylmuramyl-(pentapeptide) pyrophosphoryl-undecaprenol N-acetylglucosamine transferase</fullName>
        <ecNumber evidence="1">2.4.1.227</ecNumber>
    </recommendedName>
    <alternativeName>
        <fullName evidence="1">Undecaprenyl-PP-MurNAc-pentapeptide-UDPGlcNAc GlcNAc transferase</fullName>
    </alternativeName>
</protein>
<organism>
    <name type="scientific">Cupriavidus necator (strain ATCC 17699 / DSM 428 / KCTC 22496 / NCIMB 10442 / H16 / Stanier 337)</name>
    <name type="common">Ralstonia eutropha</name>
    <dbReference type="NCBI Taxonomy" id="381666"/>
    <lineage>
        <taxon>Bacteria</taxon>
        <taxon>Pseudomonadati</taxon>
        <taxon>Pseudomonadota</taxon>
        <taxon>Betaproteobacteria</taxon>
        <taxon>Burkholderiales</taxon>
        <taxon>Burkholderiaceae</taxon>
        <taxon>Cupriavidus</taxon>
    </lineage>
</organism>
<proteinExistence type="inferred from homology"/>
<name>MURG_CUPNH</name>
<sequence>MTGPRTLLVMAGGTGGHVFPGLAVAHALREQGWKVVWLGNRTGMEATLVPKHDIPMEFIQFGGLRGKGLVTKFLLPLNLLRAFWQSIAALRRVRPSVVLGMGGYITFPAGMMASLLGRPLVLHEQNSIAGLANKVLAKVADRVLCAFPDTLPGGEWTGNPVREELAHLDAPEARYDQRSGPLRILVVGGSLGAAALNEVVPKAIALLPGGERPVVTHQAGAKQIDTLRANYAAAQVPAQTLPFIDDMARAYADADLVICRAGAMTVSEVAAAGVAAMFVPFPHAVDDHQTTNAEFLSKQGAALLVQQKDLTAEGLAQTIASLTRPQLKDMARLARGLAKPEATRRVAEICSQLARD</sequence>
<evidence type="ECO:0000255" key="1">
    <source>
        <dbReference type="HAMAP-Rule" id="MF_00033"/>
    </source>
</evidence>
<comment type="function">
    <text evidence="1">Cell wall formation. Catalyzes the transfer of a GlcNAc subunit on undecaprenyl-pyrophosphoryl-MurNAc-pentapeptide (lipid intermediate I) to form undecaprenyl-pyrophosphoryl-MurNAc-(pentapeptide)GlcNAc (lipid intermediate II).</text>
</comment>
<comment type="catalytic activity">
    <reaction evidence="1">
        <text>di-trans,octa-cis-undecaprenyl diphospho-N-acetyl-alpha-D-muramoyl-L-alanyl-D-glutamyl-meso-2,6-diaminopimeloyl-D-alanyl-D-alanine + UDP-N-acetyl-alpha-D-glucosamine = di-trans,octa-cis-undecaprenyl diphospho-[N-acetyl-alpha-D-glucosaminyl-(1-&gt;4)]-N-acetyl-alpha-D-muramoyl-L-alanyl-D-glutamyl-meso-2,6-diaminopimeloyl-D-alanyl-D-alanine + UDP + H(+)</text>
        <dbReference type="Rhea" id="RHEA:31227"/>
        <dbReference type="ChEBI" id="CHEBI:15378"/>
        <dbReference type="ChEBI" id="CHEBI:57705"/>
        <dbReference type="ChEBI" id="CHEBI:58223"/>
        <dbReference type="ChEBI" id="CHEBI:61387"/>
        <dbReference type="ChEBI" id="CHEBI:61388"/>
        <dbReference type="EC" id="2.4.1.227"/>
    </reaction>
</comment>
<comment type="pathway">
    <text evidence="1">Cell wall biogenesis; peptidoglycan biosynthesis.</text>
</comment>
<comment type="subcellular location">
    <subcellularLocation>
        <location evidence="1">Cell inner membrane</location>
        <topology evidence="1">Peripheral membrane protein</topology>
        <orientation evidence="1">Cytoplasmic side</orientation>
    </subcellularLocation>
</comment>
<comment type="similarity">
    <text evidence="1">Belongs to the glycosyltransferase 28 family. MurG subfamily.</text>
</comment>